<sequence length="817" mass="95416">MNRRNRSNDLNPEPSIENPNNQIAEEFPGNNSVYKSDGYVDLKNNGRLFPIWILKNFKQYKLPEIIRKENEDPCNVQVKLELRKYQEFVGQYLNPQGPYTSILLYHGLGSGKTASAINLMNILYNYDNGTNFIVLIKASLHNDPWMQDLKEWLGRDPSEQNVDNVTKLDRYKNIHFVHYDSPFADSSFMSVIKTLDLSKPTMYIIDEAHNFIRNVYSNINSKLGKRAKVIYEYIMKDKRENKNTRIVLISATPAINTPFELALMFNLLRPGIFPSSELDFNRTFVTESSYPILNPMKKNMFERRILGLVSYYIGATPDLYARQELKYINLPMSAYQYDIYRIFEKLEAEIQERARRRGKQSQLYRTYTRQACNFVFPYVNMNVNGELRPRPGKFRLSEKLADDFSKGKNLDVPDTEKEILNKYTKAIENYLNETERYFQNINKKDAENGRTIINDLDEFKKGFGTKFNSFLQYYQSEGPRSSLLTEMYNCSPKMLAIAFMTYISPGKVMIYSNYVVMEGIDVMKIYFRLIGFNDFTIAREYMGYCEYHGRIDPKDRVRIKNMFNDKNNVYGNKCKVIMLSPSATEGIQLLDIRQEHIMEPYWTEVRIQQVIGRGVRQCSHRDLPMSERIVDIYRYKVIKPENLDPDDTVRQSTDEYVEDQAKSKANLIESFLGAMKEAAVDCELFKEHNMMSQSYYCFKFPESAVTKTNVGPAYREDIKDDVKYDSGLNSKNSIVERIRVVKVNAVYQINTDNNNPVYSSPTKYWYNKKTGMVYDFETHYPVGQVEFIDNLPNKLDKDTYIMRIDVIIPSITGSVNT</sequence>
<dbReference type="EC" id="3.6.4.13"/>
<dbReference type="EMBL" id="AY653733">
    <property type="protein sequence ID" value="AAV50619.1"/>
    <property type="molecule type" value="Genomic_DNA"/>
</dbReference>
<dbReference type="SMR" id="Q5UQU2"/>
<dbReference type="KEGG" id="vg:9924969"/>
<dbReference type="OrthoDB" id="1247at10239"/>
<dbReference type="Proteomes" id="UP000001134">
    <property type="component" value="Genome"/>
</dbReference>
<dbReference type="GO" id="GO:0044423">
    <property type="term" value="C:virion component"/>
    <property type="evidence" value="ECO:0007669"/>
    <property type="project" value="UniProtKB-KW"/>
</dbReference>
<dbReference type="GO" id="GO:0005524">
    <property type="term" value="F:ATP binding"/>
    <property type="evidence" value="ECO:0007669"/>
    <property type="project" value="UniProtKB-KW"/>
</dbReference>
<dbReference type="GO" id="GO:0016887">
    <property type="term" value="F:ATP hydrolysis activity"/>
    <property type="evidence" value="ECO:0007669"/>
    <property type="project" value="RHEA"/>
</dbReference>
<dbReference type="GO" id="GO:0003724">
    <property type="term" value="F:RNA helicase activity"/>
    <property type="evidence" value="ECO:0007669"/>
    <property type="project" value="UniProtKB-EC"/>
</dbReference>
<dbReference type="GO" id="GO:0006281">
    <property type="term" value="P:DNA repair"/>
    <property type="evidence" value="ECO:0007669"/>
    <property type="project" value="TreeGrafter"/>
</dbReference>
<dbReference type="GO" id="GO:0031297">
    <property type="term" value="P:replication fork processing"/>
    <property type="evidence" value="ECO:0007669"/>
    <property type="project" value="TreeGrafter"/>
</dbReference>
<dbReference type="Gene3D" id="3.40.50.300">
    <property type="entry name" value="P-loop containing nucleotide triphosphate hydrolases"/>
    <property type="match status" value="2"/>
</dbReference>
<dbReference type="InterPro" id="IPR014001">
    <property type="entry name" value="Helicase_ATP-bd"/>
</dbReference>
<dbReference type="InterPro" id="IPR001650">
    <property type="entry name" value="Helicase_C-like"/>
</dbReference>
<dbReference type="InterPro" id="IPR027417">
    <property type="entry name" value="P-loop_NTPase"/>
</dbReference>
<dbReference type="InterPro" id="IPR000330">
    <property type="entry name" value="SNF2_N"/>
</dbReference>
<dbReference type="PANTHER" id="PTHR45766">
    <property type="entry name" value="DNA ANNEALING HELICASE AND ENDONUCLEASE ZRANB3 FAMILY MEMBER"/>
    <property type="match status" value="1"/>
</dbReference>
<dbReference type="PANTHER" id="PTHR45766:SF6">
    <property type="entry name" value="SWI_SNF-RELATED MATRIX-ASSOCIATED ACTIN-DEPENDENT REGULATOR OF CHROMATIN SUBFAMILY A-LIKE PROTEIN 1"/>
    <property type="match status" value="1"/>
</dbReference>
<dbReference type="Pfam" id="PF00271">
    <property type="entry name" value="Helicase_C"/>
    <property type="match status" value="1"/>
</dbReference>
<dbReference type="Pfam" id="PF00176">
    <property type="entry name" value="SNF2-rel_dom"/>
    <property type="match status" value="1"/>
</dbReference>
<dbReference type="SMART" id="SM00487">
    <property type="entry name" value="DEXDc"/>
    <property type="match status" value="1"/>
</dbReference>
<dbReference type="SUPFAM" id="SSF52540">
    <property type="entry name" value="P-loop containing nucleoside triphosphate hydrolases"/>
    <property type="match status" value="2"/>
</dbReference>
<dbReference type="PROSITE" id="PS51192">
    <property type="entry name" value="HELICASE_ATP_BIND_1"/>
    <property type="match status" value="1"/>
</dbReference>
<dbReference type="PROSITE" id="PS51194">
    <property type="entry name" value="HELICASE_CTER"/>
    <property type="match status" value="1"/>
</dbReference>
<proteinExistence type="evidence at protein level"/>
<organism>
    <name type="scientific">Acanthamoeba polyphaga mimivirus</name>
    <name type="common">APMV</name>
    <dbReference type="NCBI Taxonomy" id="212035"/>
    <lineage>
        <taxon>Viruses</taxon>
        <taxon>Varidnaviria</taxon>
        <taxon>Bamfordvirae</taxon>
        <taxon>Nucleocytoviricota</taxon>
        <taxon>Megaviricetes</taxon>
        <taxon>Imitervirales</taxon>
        <taxon>Mimiviridae</taxon>
        <taxon>Megamimivirinae</taxon>
        <taxon>Mimivirus</taxon>
        <taxon>Mimivirus bradfordmassiliense</taxon>
    </lineage>
</organism>
<feature type="chain" id="PRO_0000247395" description="Putative ATP-dependent RNA helicase R350">
    <location>
        <begin position="1"/>
        <end position="817"/>
    </location>
</feature>
<feature type="domain" description="Helicase ATP-binding" evidence="1">
    <location>
        <begin position="93"/>
        <end position="271"/>
    </location>
</feature>
<feature type="domain" description="Helicase C-terminal" evidence="2">
    <location>
        <begin position="495"/>
        <end position="661"/>
    </location>
</feature>
<feature type="region of interest" description="Disordered" evidence="3">
    <location>
        <begin position="1"/>
        <end position="29"/>
    </location>
</feature>
<feature type="short sequence motif" description="DEAH box">
    <location>
        <begin position="206"/>
        <end position="209"/>
    </location>
</feature>
<feature type="compositionally biased region" description="Polar residues" evidence="3">
    <location>
        <begin position="17"/>
        <end position="29"/>
    </location>
</feature>
<feature type="binding site" evidence="1">
    <location>
        <begin position="106"/>
        <end position="113"/>
    </location>
    <ligand>
        <name>ATP</name>
        <dbReference type="ChEBI" id="CHEBI:30616"/>
    </ligand>
</feature>
<name>YR350_MIMIV</name>
<gene>
    <name type="ordered locus">MIMI_R350</name>
</gene>
<keyword id="KW-0067">ATP-binding</keyword>
<keyword id="KW-0347">Helicase</keyword>
<keyword id="KW-0378">Hydrolase</keyword>
<keyword id="KW-0547">Nucleotide-binding</keyword>
<keyword id="KW-1185">Reference proteome</keyword>
<keyword id="KW-0946">Virion</keyword>
<evidence type="ECO:0000255" key="1">
    <source>
        <dbReference type="PROSITE-ProRule" id="PRU00541"/>
    </source>
</evidence>
<evidence type="ECO:0000255" key="2">
    <source>
        <dbReference type="PROSITE-ProRule" id="PRU00542"/>
    </source>
</evidence>
<evidence type="ECO:0000256" key="3">
    <source>
        <dbReference type="SAM" id="MobiDB-lite"/>
    </source>
</evidence>
<evidence type="ECO:0000269" key="4">
    <source>
    </source>
</evidence>
<evidence type="ECO:0000305" key="5"/>
<accession>Q5UQU2</accession>
<organismHost>
    <name type="scientific">Acanthamoeba polyphaga</name>
    <name type="common">Amoeba</name>
    <dbReference type="NCBI Taxonomy" id="5757"/>
</organismHost>
<protein>
    <recommendedName>
        <fullName>Putative ATP-dependent RNA helicase R350</fullName>
        <ecNumber>3.6.4.13</ecNumber>
    </recommendedName>
</protein>
<reference key="1">
    <citation type="journal article" date="2004" name="Science">
        <title>The 1.2-megabase genome sequence of Mimivirus.</title>
        <authorList>
            <person name="Raoult D."/>
            <person name="Audic S."/>
            <person name="Robert C."/>
            <person name="Abergel C."/>
            <person name="Renesto P."/>
            <person name="Ogata H."/>
            <person name="La Scola B."/>
            <person name="Susan M."/>
            <person name="Claverie J.-M."/>
        </authorList>
    </citation>
    <scope>NUCLEOTIDE SEQUENCE [LARGE SCALE GENOMIC DNA]</scope>
    <source>
        <strain>Rowbotham-Bradford</strain>
    </source>
</reference>
<reference key="2">
    <citation type="journal article" date="2006" name="J. Virol.">
        <title>Mimivirus giant particles incorporate a large fraction of anonymous and unique gene products.</title>
        <authorList>
            <person name="Renesto P."/>
            <person name="Abergel C."/>
            <person name="Decloquement P."/>
            <person name="Moinier D."/>
            <person name="Azza S."/>
            <person name="Ogata H."/>
            <person name="Fourquet P."/>
            <person name="Gorvel J.-P."/>
            <person name="Claverie J.-M."/>
            <person name="Raoult D."/>
        </authorList>
    </citation>
    <scope>IDENTIFICATION BY MASS SPECTROMETRY [LARGE SCALE ANALYSIS]</scope>
    <scope>SUBCELLULAR LOCATION</scope>
</reference>
<comment type="catalytic activity">
    <reaction>
        <text>ATP + H2O = ADP + phosphate + H(+)</text>
        <dbReference type="Rhea" id="RHEA:13065"/>
        <dbReference type="ChEBI" id="CHEBI:15377"/>
        <dbReference type="ChEBI" id="CHEBI:15378"/>
        <dbReference type="ChEBI" id="CHEBI:30616"/>
        <dbReference type="ChEBI" id="CHEBI:43474"/>
        <dbReference type="ChEBI" id="CHEBI:456216"/>
        <dbReference type="EC" id="3.6.4.13"/>
    </reaction>
</comment>
<comment type="subcellular location">
    <subcellularLocation>
        <location evidence="4">Virion</location>
    </subcellularLocation>
</comment>
<comment type="similarity">
    <text evidence="5">Belongs to the DEAD box helicase family. DEAH subfamily.</text>
</comment>